<dbReference type="SMR" id="P83036"/>
<dbReference type="MEROPS" id="I03.024"/>
<dbReference type="GO" id="GO:0005576">
    <property type="term" value="C:extracellular region"/>
    <property type="evidence" value="ECO:0007669"/>
    <property type="project" value="UniProtKB-SubCell"/>
</dbReference>
<dbReference type="GO" id="GO:0004867">
    <property type="term" value="F:serine-type endopeptidase inhibitor activity"/>
    <property type="evidence" value="ECO:0007669"/>
    <property type="project" value="UniProtKB-KW"/>
</dbReference>
<dbReference type="CDD" id="cd23365">
    <property type="entry name" value="beta-trefoil_STI_LlTI-like"/>
    <property type="match status" value="1"/>
</dbReference>
<dbReference type="Gene3D" id="2.80.10.50">
    <property type="match status" value="1"/>
</dbReference>
<dbReference type="InterPro" id="IPR011065">
    <property type="entry name" value="Kunitz_inhibitor_STI-like_sf"/>
</dbReference>
<dbReference type="InterPro" id="IPR002160">
    <property type="entry name" value="Prot_inh_Kunz-lg"/>
</dbReference>
<dbReference type="PANTHER" id="PTHR33107">
    <property type="entry name" value="KUNITZ TRYPSIN INHIBITOR 2"/>
    <property type="match status" value="1"/>
</dbReference>
<dbReference type="PANTHER" id="PTHR33107:SF81">
    <property type="entry name" value="TRYPSIN INHIBITOR A"/>
    <property type="match status" value="1"/>
</dbReference>
<dbReference type="Pfam" id="PF00197">
    <property type="entry name" value="Kunitz_legume"/>
    <property type="match status" value="1"/>
</dbReference>
<dbReference type="PRINTS" id="PR00291">
    <property type="entry name" value="KUNITZINHBTR"/>
</dbReference>
<dbReference type="SMART" id="SM00452">
    <property type="entry name" value="STI"/>
    <property type="match status" value="1"/>
</dbReference>
<dbReference type="SUPFAM" id="SSF50386">
    <property type="entry name" value="STI-like"/>
    <property type="match status" value="1"/>
</dbReference>
<dbReference type="PROSITE" id="PS00283">
    <property type="entry name" value="SOYBEAN_KUNITZ"/>
    <property type="match status" value="1"/>
</dbReference>
<proteinExistence type="evidence at protein level"/>
<evidence type="ECO:0000250" key="1"/>
<evidence type="ECO:0000269" key="2">
    <source>
    </source>
</evidence>
<evidence type="ECO:0000269" key="3">
    <source>
    </source>
</evidence>
<evidence type="ECO:0000305" key="4"/>
<organism>
    <name type="scientific">Leucaena leucocephala</name>
    <name type="common">White popinac</name>
    <name type="synonym">Leucaena glauca</name>
    <dbReference type="NCBI Taxonomy" id="3866"/>
    <lineage>
        <taxon>Eukaryota</taxon>
        <taxon>Viridiplantae</taxon>
        <taxon>Streptophyta</taxon>
        <taxon>Embryophyta</taxon>
        <taxon>Tracheophyta</taxon>
        <taxon>Spermatophyta</taxon>
        <taxon>Magnoliopsida</taxon>
        <taxon>eudicotyledons</taxon>
        <taxon>Gunneridae</taxon>
        <taxon>Pentapetalae</taxon>
        <taxon>rosids</taxon>
        <taxon>fabids</taxon>
        <taxon>Fabales</taxon>
        <taxon>Fabaceae</taxon>
        <taxon>Caesalpinioideae</taxon>
        <taxon>mimosoid clade</taxon>
        <taxon>Mimoseae</taxon>
        <taxon>Leucaena</taxon>
    </lineage>
</organism>
<sequence>QVLVDLDGDPLYNGMSYYILPVARGKGGGLELARTGSESCPRTVVQTRSETSRGLPARLASPYRILIGSNIPLTIEFQPQKPYSCHGHSSRSLQWKVEKTQMVKIASSDEEQRLFGPFQIQPYRNHYKLVYCESESRNHHDDCRDLGISIDDQQNRLLVVKNGDPLVVQFAKANRGGDD</sequence>
<comment type="function">
    <text evidence="2">Inhibits trypsin, plasmin, human plasma kallikrein, chymotrypsin and factor XIIa activity.</text>
</comment>
<comment type="subunit">
    <text evidence="2 3">Heterodimer of an alpha and a beta chain linked by a disulfide bond.</text>
</comment>
<comment type="subcellular location">
    <subcellularLocation>
        <location>Secreted</location>
    </subcellularLocation>
</comment>
<comment type="tissue specificity">
    <text evidence="2">Abundant in dry seeds.</text>
</comment>
<comment type="mass spectrometry">
    <molecule>Trypsin inhibitor beta chain</molecule>
</comment>
<comment type="mass spectrometry">
    <molecule>Trypsin inhibitor beta chain</molecule>
</comment>
<comment type="miscellaneous">
    <text>There are two isoforms of the beta chain with slightly different molecular masses: 4764 and 4765 Da. These isoforms differ in their N- and C-terminal amino acids.</text>
</comment>
<comment type="similarity">
    <text evidence="4">Belongs to the protease inhibitor I3 (leguminous Kunitz-type inhibitor) family.</text>
</comment>
<protein>
    <recommendedName>
        <fullName>Trypsin inhibitor</fullName>
        <shortName>LTI</shortName>
        <shortName>LlTI</shortName>
    </recommendedName>
    <alternativeName>
        <fullName>Kunitz-type trypsin inhibitor LlTI</fullName>
    </alternativeName>
    <component>
        <recommendedName>
            <fullName>Trypsin inhibitor alpha chain</fullName>
        </recommendedName>
    </component>
    <component>
        <recommendedName>
            <fullName>Trypsin inhibitor beta chain</fullName>
        </recommendedName>
    </component>
</protein>
<name>ITRY_LEULE</name>
<keyword id="KW-0903">Direct protein sequencing</keyword>
<keyword id="KW-1015">Disulfide bond</keyword>
<keyword id="KW-0646">Protease inhibitor</keyword>
<keyword id="KW-0873">Pyrrolidone carboxylic acid</keyword>
<keyword id="KW-0964">Secreted</keyword>
<keyword id="KW-0722">Serine protease inhibitor</keyword>
<accession>P83036</accession>
<accession>P83037</accession>
<reference key="1">
    <citation type="journal article" date="2000" name="Biochim. Biophys. Acta">
        <title>Leucaena leucocephala serine proteinase inhibitor: primary structure and action on blood coagulation, kinin release and rat paw edema.</title>
        <authorList>
            <person name="Oliva M.L.V."/>
            <person name="Souza-Pinto J.C."/>
            <person name="Batista I.F.C."/>
            <person name="Araujo M.S."/>
            <person name="Silveira V.F."/>
            <person name="Auerswald E.A."/>
            <person name="Mentele R."/>
            <person name="Eckerskorn C."/>
            <person name="Sampaio M.U."/>
            <person name="Sampaio C.A.M."/>
        </authorList>
    </citation>
    <scope>PROTEIN SEQUENCE</scope>
    <scope>PYROGLUTAMATE FORMATION AT GLN-1</scope>
    <scope>FUNCTION</scope>
    <scope>SUBUNIT</scope>
    <scope>TISSUE SPECIFICITY</scope>
    <scope>VARIANT ASP-179 EXT</scope>
    <scope>MASS SPECTROMETRY</scope>
    <source>
        <tissue>Cotyledon</tissue>
    </source>
</reference>
<reference key="2">
    <citation type="submission" date="2001-06" db="UniProtKB">
        <authorList>
            <person name="Oliva M.L.V."/>
            <person name="Souza-Pinto J.C."/>
            <person name="Batista I.F.C."/>
            <person name="Araujo M.S."/>
            <person name="Silveira V.F."/>
            <person name="Auerswald E.A."/>
            <person name="Mentele R."/>
            <person name="Eckerskorn C."/>
            <person name="Sampaio M.U."/>
            <person name="Sampaio C.A.M."/>
        </authorList>
    </citation>
    <scope>SEQUENCE REVISION TO 3-4; 65 AND 67</scope>
</reference>
<reference key="3">
    <citation type="journal article" date="2004" name="Biochem. Biophys. Res. Commun.">
        <title>Molecular mechanism of enzyme inhibition: prediction of the three-dimensional structure of the dimeric trypsin inhibitor from Leucaena leucocephala by homology modelling.</title>
        <authorList>
            <person name="Sattar R."/>
            <person name="Ali S.A."/>
            <person name="Kamal M."/>
            <person name="Khan A.A."/>
            <person name="Abbasi A."/>
        </authorList>
    </citation>
    <scope>3D-STRUCTURE MODELING</scope>
    <scope>SUBUNIT</scope>
</reference>
<feature type="chain" id="PRO_0000083298" description="Trypsin inhibitor alpha chain">
    <location>
        <begin position="1"/>
        <end position="137"/>
    </location>
</feature>
<feature type="chain" id="PRO_0000428644" description="Trypsin inhibitor beta chain">
    <location>
        <begin position="138"/>
        <end position="179"/>
    </location>
</feature>
<feature type="site" description="Reactive bond for trypsin" evidence="1">
    <location>
        <begin position="64"/>
        <end position="65"/>
    </location>
</feature>
<feature type="modified residue" description="Pyrrolidone carboxylic acid" evidence="2">
    <location>
        <position position="1"/>
    </location>
</feature>
<feature type="disulfide bond" evidence="1">
    <location>
        <begin position="40"/>
        <end position="85"/>
    </location>
</feature>
<feature type="disulfide bond" description="Interchain (between alpha and beta chains)" evidence="1">
    <location>
        <begin position="132"/>
        <end position="143"/>
    </location>
</feature>
<feature type="sequence variant" description="In 4764 Da polypeptide.">
    <location>
        <position position="138"/>
    </location>
</feature>
<feature type="sequence variant" description="In 4764 Da polypeptide.">
    <original>D</original>
    <variation>DD</variation>
    <location>
        <position position="179"/>
    </location>
</feature>